<name>HRCA_STRPM</name>
<feature type="chain" id="PRO_1000010462" description="Heat-inducible transcription repressor HrcA">
    <location>
        <begin position="1"/>
        <end position="344"/>
    </location>
</feature>
<comment type="function">
    <text evidence="1">Negative regulator of class I heat shock genes (grpE-dnaK-dnaJ and groELS operons). Prevents heat-shock induction of these operons.</text>
</comment>
<comment type="similarity">
    <text evidence="1">Belongs to the HrcA family.</text>
</comment>
<accession>Q48RR1</accession>
<evidence type="ECO:0000255" key="1">
    <source>
        <dbReference type="HAMAP-Rule" id="MF_00081"/>
    </source>
</evidence>
<keyword id="KW-0678">Repressor</keyword>
<keyword id="KW-0346">Stress response</keyword>
<keyword id="KW-0804">Transcription</keyword>
<keyword id="KW-0805">Transcription regulation</keyword>
<proteinExistence type="inferred from homology"/>
<dbReference type="EMBL" id="CP000056">
    <property type="protein sequence ID" value="AAX72599.1"/>
    <property type="molecule type" value="Genomic_DNA"/>
</dbReference>
<dbReference type="RefSeq" id="WP_002983310.1">
    <property type="nucleotide sequence ID" value="NC_007296.2"/>
</dbReference>
<dbReference type="SMR" id="Q48RR1"/>
<dbReference type="GeneID" id="69900392"/>
<dbReference type="KEGG" id="spb:M28_Spy1489"/>
<dbReference type="HOGENOM" id="CLU_050019_1_0_9"/>
<dbReference type="GO" id="GO:0003677">
    <property type="term" value="F:DNA binding"/>
    <property type="evidence" value="ECO:0007669"/>
    <property type="project" value="InterPro"/>
</dbReference>
<dbReference type="GO" id="GO:0045892">
    <property type="term" value="P:negative regulation of DNA-templated transcription"/>
    <property type="evidence" value="ECO:0007669"/>
    <property type="project" value="UniProtKB-UniRule"/>
</dbReference>
<dbReference type="Gene3D" id="3.30.450.40">
    <property type="match status" value="1"/>
</dbReference>
<dbReference type="Gene3D" id="3.30.390.60">
    <property type="entry name" value="Heat-inducible transcription repressor hrca homolog, domain 3"/>
    <property type="match status" value="1"/>
</dbReference>
<dbReference type="Gene3D" id="1.10.10.10">
    <property type="entry name" value="Winged helix-like DNA-binding domain superfamily/Winged helix DNA-binding domain"/>
    <property type="match status" value="1"/>
</dbReference>
<dbReference type="HAMAP" id="MF_00081">
    <property type="entry name" value="HrcA"/>
    <property type="match status" value="1"/>
</dbReference>
<dbReference type="InterPro" id="IPR029016">
    <property type="entry name" value="GAF-like_dom_sf"/>
</dbReference>
<dbReference type="InterPro" id="IPR002571">
    <property type="entry name" value="HrcA"/>
</dbReference>
<dbReference type="InterPro" id="IPR021153">
    <property type="entry name" value="HrcA_C"/>
</dbReference>
<dbReference type="InterPro" id="IPR036388">
    <property type="entry name" value="WH-like_DNA-bd_sf"/>
</dbReference>
<dbReference type="InterPro" id="IPR036390">
    <property type="entry name" value="WH_DNA-bd_sf"/>
</dbReference>
<dbReference type="InterPro" id="IPR005104">
    <property type="entry name" value="WHTH_HrcA_DNA-bd"/>
</dbReference>
<dbReference type="InterPro" id="IPR023120">
    <property type="entry name" value="WHTH_transcript_rep_HrcA_IDD"/>
</dbReference>
<dbReference type="NCBIfam" id="TIGR00331">
    <property type="entry name" value="hrcA"/>
    <property type="match status" value="1"/>
</dbReference>
<dbReference type="PANTHER" id="PTHR34824">
    <property type="entry name" value="HEAT-INDUCIBLE TRANSCRIPTION REPRESSOR HRCA"/>
    <property type="match status" value="1"/>
</dbReference>
<dbReference type="PANTHER" id="PTHR34824:SF1">
    <property type="entry name" value="HEAT-INDUCIBLE TRANSCRIPTION REPRESSOR HRCA"/>
    <property type="match status" value="1"/>
</dbReference>
<dbReference type="Pfam" id="PF01628">
    <property type="entry name" value="HrcA"/>
    <property type="match status" value="1"/>
</dbReference>
<dbReference type="Pfam" id="PF03444">
    <property type="entry name" value="HrcA_DNA-bdg"/>
    <property type="match status" value="1"/>
</dbReference>
<dbReference type="PIRSF" id="PIRSF005485">
    <property type="entry name" value="HrcA"/>
    <property type="match status" value="1"/>
</dbReference>
<dbReference type="SUPFAM" id="SSF55781">
    <property type="entry name" value="GAF domain-like"/>
    <property type="match status" value="1"/>
</dbReference>
<dbReference type="SUPFAM" id="SSF46785">
    <property type="entry name" value="Winged helix' DNA-binding domain"/>
    <property type="match status" value="1"/>
</dbReference>
<sequence>MITQRQNDILNLIVELFTQTHEPVGSKALQRTIDSSSATIRNDMAKLEKLGLLEKAHTSSGRMPSPAGFKYFVEHSLRLDSIDEQDIYHVIKTFDFEAFKLEDMLQKASHILAEMTGYTSVILDVEPARQRLTGFDVVQLSNHDALAVMTLDESKPVTVQFAIPRNFLTRDLIAFKAIVEERLLDSSVIDIHYKLRTEIPQIVQKYFVTTDNVLQLFDYVFSELFLETVFVAGKVNSLTYSDLSTYQFLDNEQQVAISLRQSLKEGEMASVQVADSQEAALADVSVLTHKFLIPYRGFGLLSLIGPIDMDYRRSVSLVNIIGKVLAAKLGDYYRYLNSNHYEVH</sequence>
<organism>
    <name type="scientific">Streptococcus pyogenes serotype M28 (strain MGAS6180)</name>
    <dbReference type="NCBI Taxonomy" id="319701"/>
    <lineage>
        <taxon>Bacteria</taxon>
        <taxon>Bacillati</taxon>
        <taxon>Bacillota</taxon>
        <taxon>Bacilli</taxon>
        <taxon>Lactobacillales</taxon>
        <taxon>Streptococcaceae</taxon>
        <taxon>Streptococcus</taxon>
    </lineage>
</organism>
<reference key="1">
    <citation type="journal article" date="2005" name="J. Infect. Dis.">
        <title>Genome sequence of a serotype M28 strain of group A Streptococcus: potential new insights into puerperal sepsis and bacterial disease specificity.</title>
        <authorList>
            <person name="Green N.M."/>
            <person name="Zhang S."/>
            <person name="Porcella S.F."/>
            <person name="Nagiec M.J."/>
            <person name="Barbian K.D."/>
            <person name="Beres S.B."/>
            <person name="Lefebvre R.B."/>
            <person name="Musser J.M."/>
        </authorList>
    </citation>
    <scope>NUCLEOTIDE SEQUENCE [LARGE SCALE GENOMIC DNA]</scope>
    <source>
        <strain>MGAS6180</strain>
    </source>
</reference>
<protein>
    <recommendedName>
        <fullName evidence="1">Heat-inducible transcription repressor HrcA</fullName>
    </recommendedName>
</protein>
<gene>
    <name evidence="1" type="primary">hrcA</name>
    <name type="ordered locus">M28_Spy1489</name>
</gene>